<reference key="1">
    <citation type="journal article" date="1992" name="Biochim. Biophys. Acta">
        <title>Complete cDNA sequence of bovine alpha 1-antitrypsin.</title>
        <authorList>
            <person name="Sinha D."/>
            <person name="Bakhshi M.R."/>
            <person name="Kirby E.P."/>
        </authorList>
    </citation>
    <scope>NUCLEOTIDE SEQUENCE [MRNA]</scope>
    <source>
        <tissue>Liver</tissue>
    </source>
</reference>
<reference key="2">
    <citation type="journal article" date="2005" name="BMC Genomics">
        <title>Characterization of 954 bovine full-CDS cDNA sequences.</title>
        <authorList>
            <person name="Harhay G.P."/>
            <person name="Sonstegard T.S."/>
            <person name="Keele J.W."/>
            <person name="Heaton M.P."/>
            <person name="Clawson M.L."/>
            <person name="Snelling W.M."/>
            <person name="Wiedmann R.T."/>
            <person name="Van Tassell C.P."/>
            <person name="Smith T.P.L."/>
        </authorList>
    </citation>
    <scope>NUCLEOTIDE SEQUENCE [LARGE SCALE MRNA]</scope>
</reference>
<reference key="3">
    <citation type="submission" date="2005-08" db="EMBL/GenBank/DDBJ databases">
        <authorList>
            <consortium name="NIH - Mammalian Gene Collection (MGC) project"/>
        </authorList>
    </citation>
    <scope>NUCLEOTIDE SEQUENCE [LARGE SCALE MRNA]</scope>
    <source>
        <strain>Crossbred X Angus</strain>
        <tissue>Liver</tissue>
    </source>
</reference>
<reference key="4">
    <citation type="journal article" date="1994" name="J. Biochem.">
        <title>Isolation and characterization of two protease inhibitors from bovine plasma.</title>
        <authorList>
            <person name="Sinha D."/>
            <person name="Yang X."/>
            <person name="Emig F."/>
            <person name="Kirby E.P."/>
        </authorList>
    </citation>
    <scope>CHARACTERIZATION</scope>
</reference>
<reference key="5">
    <citation type="journal article" date="2000" name="Nature">
        <title>Structure of a serpin-protease complex shows inhibition by deformation.</title>
        <authorList>
            <person name="Huntington J.A."/>
            <person name="Read R.J."/>
            <person name="Carrell R.W."/>
        </authorList>
    </citation>
    <scope>INTERACTION WITH PRSS1</scope>
</reference>
<accession>P34955</accession>
<accession>Q3SZS3</accession>
<dbReference type="EMBL" id="X63129">
    <property type="protein sequence ID" value="CAA44840.1"/>
    <property type="molecule type" value="mRNA"/>
</dbReference>
<dbReference type="EMBL" id="BT025459">
    <property type="protein sequence ID" value="ABF57415.1"/>
    <property type="molecule type" value="mRNA"/>
</dbReference>
<dbReference type="EMBL" id="BC102730">
    <property type="protein sequence ID" value="AAI02731.1"/>
    <property type="molecule type" value="mRNA"/>
</dbReference>
<dbReference type="PIR" id="S21097">
    <property type="entry name" value="S21097"/>
</dbReference>
<dbReference type="RefSeq" id="NP_776307.1">
    <property type="nucleotide sequence ID" value="NM_173882.2"/>
</dbReference>
<dbReference type="RefSeq" id="XP_005222164.1">
    <property type="nucleotide sequence ID" value="XM_005222107.3"/>
</dbReference>
<dbReference type="SMR" id="P34955"/>
<dbReference type="FunCoup" id="P34955">
    <property type="interactions" value="212"/>
</dbReference>
<dbReference type="STRING" id="9913.ENSBTAP00000065816"/>
<dbReference type="MEROPS" id="I04.001"/>
<dbReference type="GlyCosmos" id="P34955">
    <property type="glycosylation" value="4 sites, No reported glycans"/>
</dbReference>
<dbReference type="GlyGen" id="P34955">
    <property type="glycosylation" value="4 sites"/>
</dbReference>
<dbReference type="PaxDb" id="9913-ENSBTAP00000004927"/>
<dbReference type="PeptideAtlas" id="P34955"/>
<dbReference type="Ensembl" id="ENSBTAT00000004927.5">
    <property type="protein sequence ID" value="ENSBTAP00000004927.3"/>
    <property type="gene ID" value="ENSBTAG00000018843.7"/>
</dbReference>
<dbReference type="GeneID" id="280699"/>
<dbReference type="KEGG" id="bta:280699"/>
<dbReference type="CTD" id="5265"/>
<dbReference type="VEuPathDB" id="HostDB:ENSBTAG00000018843"/>
<dbReference type="VGNC" id="VGNC:53953">
    <property type="gene designation" value="SERPINA1"/>
</dbReference>
<dbReference type="eggNOG" id="KOG2392">
    <property type="taxonomic scope" value="Eukaryota"/>
</dbReference>
<dbReference type="GeneTree" id="ENSGT00940000154493"/>
<dbReference type="HOGENOM" id="CLU_023330_2_1_1"/>
<dbReference type="InParanoid" id="P34955"/>
<dbReference type="OMA" id="MEIMPMS"/>
<dbReference type="OrthoDB" id="671595at2759"/>
<dbReference type="TreeFam" id="TF343201"/>
<dbReference type="Reactome" id="R-BTA-114608">
    <property type="pathway name" value="Platelet degranulation"/>
</dbReference>
<dbReference type="Reactome" id="R-BTA-204005">
    <property type="pathway name" value="COPII-mediated vesicle transport"/>
</dbReference>
<dbReference type="Reactome" id="R-BTA-381426">
    <property type="pathway name" value="Regulation of Insulin-like Growth Factor (IGF) transport and uptake by Insulin-like Growth Factor Binding Proteins (IGFBPs)"/>
</dbReference>
<dbReference type="Reactome" id="R-BTA-5694530">
    <property type="pathway name" value="Cargo concentration in the ER"/>
</dbReference>
<dbReference type="Reactome" id="R-BTA-6798695">
    <property type="pathway name" value="Neutrophil degranulation"/>
</dbReference>
<dbReference type="Reactome" id="R-BTA-8957275">
    <property type="pathway name" value="Post-translational protein phosphorylation"/>
</dbReference>
<dbReference type="Proteomes" id="UP000009136">
    <property type="component" value="Chromosome 21"/>
</dbReference>
<dbReference type="Bgee" id="ENSBTAG00000018843">
    <property type="expression patterns" value="Expressed in liver and 72 other cell types or tissues"/>
</dbReference>
<dbReference type="GO" id="GO:0005783">
    <property type="term" value="C:endoplasmic reticulum"/>
    <property type="evidence" value="ECO:0007669"/>
    <property type="project" value="Ensembl"/>
</dbReference>
<dbReference type="GO" id="GO:0005615">
    <property type="term" value="C:extracellular space"/>
    <property type="evidence" value="ECO:0000318"/>
    <property type="project" value="GO_Central"/>
</dbReference>
<dbReference type="GO" id="GO:0005794">
    <property type="term" value="C:Golgi apparatus"/>
    <property type="evidence" value="ECO:0007669"/>
    <property type="project" value="Ensembl"/>
</dbReference>
<dbReference type="GO" id="GO:0042802">
    <property type="term" value="F:identical protein binding"/>
    <property type="evidence" value="ECO:0007669"/>
    <property type="project" value="Ensembl"/>
</dbReference>
<dbReference type="GO" id="GO:0002020">
    <property type="term" value="F:protease binding"/>
    <property type="evidence" value="ECO:0007669"/>
    <property type="project" value="Ensembl"/>
</dbReference>
<dbReference type="GO" id="GO:0004867">
    <property type="term" value="F:serine-type endopeptidase inhibitor activity"/>
    <property type="evidence" value="ECO:0000318"/>
    <property type="project" value="GO_Central"/>
</dbReference>
<dbReference type="CDD" id="cd02056">
    <property type="entry name" value="serpinA1_A1AT"/>
    <property type="match status" value="1"/>
</dbReference>
<dbReference type="FunFam" id="2.30.39.10:FF:000003">
    <property type="entry name" value="alpha-1-antitrypsin isoform X1"/>
    <property type="match status" value="1"/>
</dbReference>
<dbReference type="FunFam" id="3.30.497.10:FF:000001">
    <property type="entry name" value="Serine protease inhibitor"/>
    <property type="match status" value="1"/>
</dbReference>
<dbReference type="FunFam" id="2.10.310.10:FF:000001">
    <property type="entry name" value="Serpin family A member 1"/>
    <property type="match status" value="1"/>
</dbReference>
<dbReference type="Gene3D" id="2.30.39.10">
    <property type="entry name" value="Alpha-1-antitrypsin, domain 1"/>
    <property type="match status" value="1"/>
</dbReference>
<dbReference type="Gene3D" id="3.30.497.10">
    <property type="entry name" value="Antithrombin, subunit I, domain 2"/>
    <property type="match status" value="1"/>
</dbReference>
<dbReference type="Gene3D" id="2.10.310.10">
    <property type="entry name" value="Serpins superfamily"/>
    <property type="match status" value="1"/>
</dbReference>
<dbReference type="InterPro" id="IPR023795">
    <property type="entry name" value="Serpin_CS"/>
</dbReference>
<dbReference type="InterPro" id="IPR023796">
    <property type="entry name" value="Serpin_dom"/>
</dbReference>
<dbReference type="InterPro" id="IPR000215">
    <property type="entry name" value="Serpin_fam"/>
</dbReference>
<dbReference type="InterPro" id="IPR036186">
    <property type="entry name" value="Serpin_sf"/>
</dbReference>
<dbReference type="InterPro" id="IPR042178">
    <property type="entry name" value="Serpin_sf_1"/>
</dbReference>
<dbReference type="InterPro" id="IPR042185">
    <property type="entry name" value="Serpin_sf_2"/>
</dbReference>
<dbReference type="PANTHER" id="PTHR11461:SF165">
    <property type="entry name" value="ALPHA-1-ANTITRYPSIN"/>
    <property type="match status" value="1"/>
</dbReference>
<dbReference type="PANTHER" id="PTHR11461">
    <property type="entry name" value="SERINE PROTEASE INHIBITOR, SERPIN"/>
    <property type="match status" value="1"/>
</dbReference>
<dbReference type="Pfam" id="PF00079">
    <property type="entry name" value="Serpin"/>
    <property type="match status" value="1"/>
</dbReference>
<dbReference type="SMART" id="SM00093">
    <property type="entry name" value="SERPIN"/>
    <property type="match status" value="1"/>
</dbReference>
<dbReference type="SUPFAM" id="SSF56574">
    <property type="entry name" value="Serpins"/>
    <property type="match status" value="1"/>
</dbReference>
<dbReference type="PROSITE" id="PS00284">
    <property type="entry name" value="SERPIN"/>
    <property type="match status" value="1"/>
</dbReference>
<keyword id="KW-0325">Glycoprotein</keyword>
<keyword id="KW-0597">Phosphoprotein</keyword>
<keyword id="KW-0646">Protease inhibitor</keyword>
<keyword id="KW-1185">Reference proteome</keyword>
<keyword id="KW-0964">Secreted</keyword>
<keyword id="KW-0722">Serine protease inhibitor</keyword>
<keyword id="KW-0732">Signal</keyword>
<evidence type="ECO:0000250" key="1"/>
<evidence type="ECO:0000250" key="2">
    <source>
        <dbReference type="UniProtKB" id="P01009"/>
    </source>
</evidence>
<evidence type="ECO:0000255" key="3"/>
<evidence type="ECO:0000269" key="4">
    <source>
    </source>
</evidence>
<evidence type="ECO:0000305" key="5"/>
<name>A1AT_BOVIN</name>
<proteinExistence type="evidence at protein level"/>
<gene>
    <name type="primary">SERPINA1</name>
    <name type="synonym">PI</name>
</gene>
<sequence length="416" mass="46104">MALSITRGLLLLAALCCLAPISLAGVLQGHAVQETDDTSHQEAACHKIAPNLANFAFSIYHHLAHQSNTSNIFFSPVSIASAFAMLSLGAKGNTHTEILKGLGFNLTELAEAEIHKGFQHLLHTLNQPNHQLQLTTGNGLFINESAKLVDTFLEDVKNLYHSEAFSINFRDAEEAKKKINDYVEKGSHGKIVELVKVLDPNTVFALVNYISFKGKWEKPFEMKHTTERDFHVDEQTTVKVPMMNRLGMFDLHYCDKLASWVLLLDYVGNVTACFILPDLGKLQQLEDKLNNELLAKFLEKKYASSANLHLPKLSISETYDLKSVLGDVGITEVFSDRADLSGITKEQPLKVSKALHKAALTIDEKGTEAVGSTFLEAIPMSLPPDVEFNRPFLCILYDRNTKSPLFVGKVVNPTQA</sequence>
<comment type="function">
    <text evidence="1">Inhibitor of serine proteases. Its primary target is elastase, but it also has a moderate affinity for plasmin and thrombin. Inhibits trypsin, chymotrypsin and plasminogen activator (By similarity).</text>
</comment>
<comment type="subunit">
    <text evidence="2 4">Interacts with CELA2A (By similarity). Interacts with ERGIC3 and LMAN1/ERGIC53 (By similarity). Interacts with PRSS1/Trypsin (PubMed:11057674).</text>
</comment>
<comment type="subcellular location">
    <subcellularLocation>
        <location>Secreted</location>
    </subcellularLocation>
</comment>
<comment type="tissue specificity">
    <text>Plasma.</text>
</comment>
<comment type="domain">
    <text evidence="1">The reactive center loop (RCL) extends out from the body of the protein and directs binding to the target protease. The protease cleaves the serpin at the reactive site within the RCL, establishing a covalent linkage between the carboxyl group of the serpin reactive site and the serine hydroxyl of the protease. The resulting inactive serpin-protease complex is highly stable (By similarity).</text>
</comment>
<comment type="similarity">
    <text evidence="5">Belongs to the serpin family.</text>
</comment>
<organism>
    <name type="scientific">Bos taurus</name>
    <name type="common">Bovine</name>
    <dbReference type="NCBI Taxonomy" id="9913"/>
    <lineage>
        <taxon>Eukaryota</taxon>
        <taxon>Metazoa</taxon>
        <taxon>Chordata</taxon>
        <taxon>Craniata</taxon>
        <taxon>Vertebrata</taxon>
        <taxon>Euteleostomi</taxon>
        <taxon>Mammalia</taxon>
        <taxon>Eutheria</taxon>
        <taxon>Laurasiatheria</taxon>
        <taxon>Artiodactyla</taxon>
        <taxon>Ruminantia</taxon>
        <taxon>Pecora</taxon>
        <taxon>Bovidae</taxon>
        <taxon>Bovinae</taxon>
        <taxon>Bos</taxon>
    </lineage>
</organism>
<feature type="signal peptide" evidence="1">
    <location>
        <begin position="1"/>
        <end position="24"/>
    </location>
</feature>
<feature type="chain" id="PRO_0000032380" description="Alpha-1-antiproteinase">
    <location>
        <begin position="25"/>
        <end position="416"/>
    </location>
</feature>
<feature type="region of interest" description="RCL">
    <location>
        <begin position="371"/>
        <end position="390"/>
    </location>
</feature>
<feature type="site" description="Reactive bond">
    <location>
        <begin position="380"/>
        <end position="381"/>
    </location>
</feature>
<feature type="modified residue" description="Phosphoserine" evidence="2">
    <location>
        <position position="381"/>
    </location>
</feature>
<feature type="glycosylation site" description="N-linked (GlcNAc...) asparagine" evidence="3">
    <location>
        <position position="68"/>
    </location>
</feature>
<feature type="glycosylation site" description="N-linked (GlcNAc...) asparagine" evidence="3">
    <location>
        <position position="105"/>
    </location>
</feature>
<feature type="glycosylation site" description="N-linked (GlcNAc...) asparagine" evidence="3">
    <location>
        <position position="143"/>
    </location>
</feature>
<feature type="glycosylation site" description="N-linked (GlcNAc...) asparagine" evidence="3">
    <location>
        <position position="269"/>
    </location>
</feature>
<protein>
    <recommendedName>
        <fullName>Alpha-1-antiproteinase</fullName>
    </recommendedName>
    <alternativeName>
        <fullName>Alpha-1-antitrypsin</fullName>
    </alternativeName>
    <alternativeName>
        <fullName>Alpha-1-proteinase inhibitor</fullName>
    </alternativeName>
    <alternativeName>
        <fullName>Serpin A1</fullName>
    </alternativeName>
</protein>